<gene>
    <name evidence="1" type="primary">ezrA</name>
    <name type="ordered locus">GK2798</name>
</gene>
<name>EZRA_GEOKA</name>
<proteinExistence type="inferred from homology"/>
<reference key="1">
    <citation type="journal article" date="2004" name="Nucleic Acids Res.">
        <title>Thermoadaptation trait revealed by the genome sequence of thermophilic Geobacillus kaustophilus.</title>
        <authorList>
            <person name="Takami H."/>
            <person name="Takaki Y."/>
            <person name="Chee G.-J."/>
            <person name="Nishi S."/>
            <person name="Shimamura S."/>
            <person name="Suzuki H."/>
            <person name="Matsui S."/>
            <person name="Uchiyama I."/>
        </authorList>
    </citation>
    <scope>NUCLEOTIDE SEQUENCE [LARGE SCALE GENOMIC DNA]</scope>
    <source>
        <strain>HTA426</strain>
    </source>
</reference>
<organism>
    <name type="scientific">Geobacillus kaustophilus (strain HTA426)</name>
    <dbReference type="NCBI Taxonomy" id="235909"/>
    <lineage>
        <taxon>Bacteria</taxon>
        <taxon>Bacillati</taxon>
        <taxon>Bacillota</taxon>
        <taxon>Bacilli</taxon>
        <taxon>Bacillales</taxon>
        <taxon>Anoxybacillaceae</taxon>
        <taxon>Geobacillus</taxon>
        <taxon>Geobacillus thermoleovorans group</taxon>
    </lineage>
</organism>
<comment type="function">
    <text evidence="1">Negative regulator of FtsZ ring formation; modulates the frequency and position of FtsZ ring formation. Inhibits FtsZ ring formation at polar sites. Interacts either with FtsZ or with one of its binding partners to promote depolymerization.</text>
</comment>
<comment type="subcellular location">
    <subcellularLocation>
        <location evidence="1">Cell membrane</location>
        <topology evidence="1">Single-pass membrane protein</topology>
    </subcellularLocation>
    <text evidence="1">Colocalized with FtsZ to the nascent septal site.</text>
</comment>
<comment type="similarity">
    <text evidence="1">Belongs to the EzrA family.</text>
</comment>
<protein>
    <recommendedName>
        <fullName evidence="1">Septation ring formation regulator EzrA</fullName>
    </recommendedName>
</protein>
<feature type="chain" id="PRO_1000045896" description="Septation ring formation regulator EzrA">
    <location>
        <begin position="1"/>
        <end position="567"/>
    </location>
</feature>
<feature type="topological domain" description="Extracellular" evidence="1">
    <location>
        <begin position="1"/>
        <end position="2"/>
    </location>
</feature>
<feature type="transmembrane region" description="Helical" evidence="1">
    <location>
        <begin position="3"/>
        <end position="21"/>
    </location>
</feature>
<feature type="topological domain" description="Cytoplasmic" evidence="1">
    <location>
        <begin position="22"/>
        <end position="567"/>
    </location>
</feature>
<feature type="coiled-coil region" evidence="1">
    <location>
        <begin position="98"/>
        <end position="159"/>
    </location>
</feature>
<feature type="coiled-coil region" evidence="1">
    <location>
        <begin position="251"/>
        <end position="497"/>
    </location>
</feature>
<accession>Q5KW53</accession>
<evidence type="ECO:0000255" key="1">
    <source>
        <dbReference type="HAMAP-Rule" id="MF_00728"/>
    </source>
</evidence>
<sequence>MGMAWIVLLLGAGAIIYNHVYRKRMYREIDRLEEWKINLMNRPVPDELAKVKQLNMTGETEQLFERWRQQWDDIVAVKLPNVEEQLFDAERLLDKYRYRQARRLLGQIADGLRRLEEEVHEIIHEVNELIGSEEQSRAEIEELRAAHREAKKALLAYRYTFGSAADLLDVRLTEAEKQFQRFAELTEAGNYLAARDVVLTLKEELGRLTAMMEEIPKLLGECQTSLPAQLAELADGYREMEERGYILDHLHMERTLQEKREKIEQCLAMIHELRIEEAKQIVAELKEEIDALYDLLENEVLAHQYVQTEMPRLSGMLQELAAEAKETEAEALFVQQSYHLAPSDLEKYRSIEKQLHQLQKRFFLIQDRVAEAKTAYSLLKEELEQLVSQIDLMKEEHEQFRTMLQTLRKDELIAREKLDGMRKTLAEALRLVQKSRLPGLPEPYALELAEARRSLQAVAARLEEKPLDMPAVDQALEEAKAAVERLYERTVEMIEQATLAERTIQYGNRYRRRYPAVRKGLEEAEFLFRHYDYEEALRQAVAAVEEVEPGAFDRVQKLWQEDNSREQ</sequence>
<keyword id="KW-0131">Cell cycle</keyword>
<keyword id="KW-0132">Cell division</keyword>
<keyword id="KW-1003">Cell membrane</keyword>
<keyword id="KW-0175">Coiled coil</keyword>
<keyword id="KW-0472">Membrane</keyword>
<keyword id="KW-1185">Reference proteome</keyword>
<keyword id="KW-0717">Septation</keyword>
<keyword id="KW-0812">Transmembrane</keyword>
<keyword id="KW-1133">Transmembrane helix</keyword>
<dbReference type="EMBL" id="BA000043">
    <property type="protein sequence ID" value="BAD77083.1"/>
    <property type="molecule type" value="Genomic_DNA"/>
</dbReference>
<dbReference type="RefSeq" id="WP_011232272.1">
    <property type="nucleotide sequence ID" value="NC_006510.1"/>
</dbReference>
<dbReference type="SMR" id="Q5KW53"/>
<dbReference type="STRING" id="235909.GK2798"/>
<dbReference type="GeneID" id="32064691"/>
<dbReference type="KEGG" id="gka:GK2798"/>
<dbReference type="PATRIC" id="fig|235909.7.peg.2984"/>
<dbReference type="eggNOG" id="COG4477">
    <property type="taxonomic scope" value="Bacteria"/>
</dbReference>
<dbReference type="HOGENOM" id="CLU_034079_1_0_9"/>
<dbReference type="Proteomes" id="UP000001172">
    <property type="component" value="Chromosome"/>
</dbReference>
<dbReference type="GO" id="GO:0005886">
    <property type="term" value="C:plasma membrane"/>
    <property type="evidence" value="ECO:0007669"/>
    <property type="project" value="UniProtKB-SubCell"/>
</dbReference>
<dbReference type="GO" id="GO:0005940">
    <property type="term" value="C:septin ring"/>
    <property type="evidence" value="ECO:0007669"/>
    <property type="project" value="InterPro"/>
</dbReference>
<dbReference type="GO" id="GO:0000917">
    <property type="term" value="P:division septum assembly"/>
    <property type="evidence" value="ECO:0007669"/>
    <property type="project" value="UniProtKB-KW"/>
</dbReference>
<dbReference type="GO" id="GO:0000921">
    <property type="term" value="P:septin ring assembly"/>
    <property type="evidence" value="ECO:0007669"/>
    <property type="project" value="InterPro"/>
</dbReference>
<dbReference type="HAMAP" id="MF_00728">
    <property type="entry name" value="EzrA"/>
    <property type="match status" value="1"/>
</dbReference>
<dbReference type="InterPro" id="IPR010379">
    <property type="entry name" value="EzrA"/>
</dbReference>
<dbReference type="NCBIfam" id="NF003413">
    <property type="entry name" value="PRK04778.1-7"/>
    <property type="match status" value="1"/>
</dbReference>
<dbReference type="Pfam" id="PF06160">
    <property type="entry name" value="EzrA"/>
    <property type="match status" value="1"/>
</dbReference>